<gene>
    <name evidence="1" type="primary">cynS</name>
    <name type="ordered locus">ECIAI1_0342</name>
</gene>
<name>CYNS_ECO8A</name>
<organism>
    <name type="scientific">Escherichia coli O8 (strain IAI1)</name>
    <dbReference type="NCBI Taxonomy" id="585034"/>
    <lineage>
        <taxon>Bacteria</taxon>
        <taxon>Pseudomonadati</taxon>
        <taxon>Pseudomonadota</taxon>
        <taxon>Gammaproteobacteria</taxon>
        <taxon>Enterobacterales</taxon>
        <taxon>Enterobacteriaceae</taxon>
        <taxon>Escherichia</taxon>
    </lineage>
</organism>
<comment type="function">
    <text evidence="1">Catalyzes the reaction of cyanate with bicarbonate to produce ammonia and carbon dioxide.</text>
</comment>
<comment type="catalytic activity">
    <reaction evidence="1">
        <text>cyanate + hydrogencarbonate + 3 H(+) = NH4(+) + 2 CO2</text>
        <dbReference type="Rhea" id="RHEA:11120"/>
        <dbReference type="ChEBI" id="CHEBI:15378"/>
        <dbReference type="ChEBI" id="CHEBI:16526"/>
        <dbReference type="ChEBI" id="CHEBI:17544"/>
        <dbReference type="ChEBI" id="CHEBI:28938"/>
        <dbReference type="ChEBI" id="CHEBI:29195"/>
        <dbReference type="EC" id="4.2.1.104"/>
    </reaction>
</comment>
<comment type="similarity">
    <text evidence="1">Belongs to the cyanase family.</text>
</comment>
<proteinExistence type="inferred from homology"/>
<reference key="1">
    <citation type="journal article" date="2009" name="PLoS Genet.">
        <title>Organised genome dynamics in the Escherichia coli species results in highly diverse adaptive paths.</title>
        <authorList>
            <person name="Touchon M."/>
            <person name="Hoede C."/>
            <person name="Tenaillon O."/>
            <person name="Barbe V."/>
            <person name="Baeriswyl S."/>
            <person name="Bidet P."/>
            <person name="Bingen E."/>
            <person name="Bonacorsi S."/>
            <person name="Bouchier C."/>
            <person name="Bouvet O."/>
            <person name="Calteau A."/>
            <person name="Chiapello H."/>
            <person name="Clermont O."/>
            <person name="Cruveiller S."/>
            <person name="Danchin A."/>
            <person name="Diard M."/>
            <person name="Dossat C."/>
            <person name="Karoui M.E."/>
            <person name="Frapy E."/>
            <person name="Garry L."/>
            <person name="Ghigo J.M."/>
            <person name="Gilles A.M."/>
            <person name="Johnson J."/>
            <person name="Le Bouguenec C."/>
            <person name="Lescat M."/>
            <person name="Mangenot S."/>
            <person name="Martinez-Jehanne V."/>
            <person name="Matic I."/>
            <person name="Nassif X."/>
            <person name="Oztas S."/>
            <person name="Petit M.A."/>
            <person name="Pichon C."/>
            <person name="Rouy Z."/>
            <person name="Ruf C.S."/>
            <person name="Schneider D."/>
            <person name="Tourret J."/>
            <person name="Vacherie B."/>
            <person name="Vallenet D."/>
            <person name="Medigue C."/>
            <person name="Rocha E.P.C."/>
            <person name="Denamur E."/>
        </authorList>
    </citation>
    <scope>NUCLEOTIDE SEQUENCE [LARGE SCALE GENOMIC DNA]</scope>
    <source>
        <strain>IAI1</strain>
    </source>
</reference>
<sequence>MIQSQINRNIRLDLADAILLSKAKKDLSFAEIADGTGLAEAFVTAALLGQQALPADAARLVGAKLDLDEDAILLLQMIPLRGCIDDRIPTDPTMYRFYEMLQVYGTTLKALVHEKFGDGIISAINFKLDVKKVADPEGGERAVITLDGKYLPTKPF</sequence>
<accession>B7M2Y9</accession>
<dbReference type="EC" id="4.2.1.104" evidence="1"/>
<dbReference type="EMBL" id="CU928160">
    <property type="protein sequence ID" value="CAQ97216.1"/>
    <property type="molecule type" value="Genomic_DNA"/>
</dbReference>
<dbReference type="RefSeq" id="WP_000616241.1">
    <property type="nucleotide sequence ID" value="NC_011741.1"/>
</dbReference>
<dbReference type="SMR" id="B7M2Y9"/>
<dbReference type="GeneID" id="75202503"/>
<dbReference type="KEGG" id="ecr:ECIAI1_0342"/>
<dbReference type="HOGENOM" id="CLU_103452_1_1_6"/>
<dbReference type="GO" id="GO:0008824">
    <property type="term" value="F:cyanate hydratase activity"/>
    <property type="evidence" value="ECO:0007669"/>
    <property type="project" value="UniProtKB-UniRule"/>
</dbReference>
<dbReference type="GO" id="GO:0003677">
    <property type="term" value="F:DNA binding"/>
    <property type="evidence" value="ECO:0007669"/>
    <property type="project" value="InterPro"/>
</dbReference>
<dbReference type="GO" id="GO:0009439">
    <property type="term" value="P:cyanate metabolic process"/>
    <property type="evidence" value="ECO:0007669"/>
    <property type="project" value="UniProtKB-UniRule"/>
</dbReference>
<dbReference type="CDD" id="cd00559">
    <property type="entry name" value="Cyanase_C"/>
    <property type="match status" value="1"/>
</dbReference>
<dbReference type="FunFam" id="3.30.1160.10:FF:000001">
    <property type="entry name" value="Cyanate hydratase"/>
    <property type="match status" value="1"/>
</dbReference>
<dbReference type="Gene3D" id="3.30.1160.10">
    <property type="entry name" value="Cyanate lyase, C-terminal domain"/>
    <property type="match status" value="1"/>
</dbReference>
<dbReference type="Gene3D" id="1.10.260.40">
    <property type="entry name" value="lambda repressor-like DNA-binding domains"/>
    <property type="match status" value="1"/>
</dbReference>
<dbReference type="HAMAP" id="MF_00535">
    <property type="entry name" value="Cyanate_hydrat"/>
    <property type="match status" value="1"/>
</dbReference>
<dbReference type="InterPro" id="IPR008076">
    <property type="entry name" value="Cyanase"/>
</dbReference>
<dbReference type="InterPro" id="IPR003712">
    <property type="entry name" value="Cyanate_lyase_C"/>
</dbReference>
<dbReference type="InterPro" id="IPR036581">
    <property type="entry name" value="Cyanate_lyase_C_sf"/>
</dbReference>
<dbReference type="InterPro" id="IPR048564">
    <property type="entry name" value="CYNS_N"/>
</dbReference>
<dbReference type="InterPro" id="IPR010982">
    <property type="entry name" value="Lambda_DNA-bd_dom_sf"/>
</dbReference>
<dbReference type="NCBIfam" id="TIGR00673">
    <property type="entry name" value="cynS"/>
    <property type="match status" value="1"/>
</dbReference>
<dbReference type="NCBIfam" id="NF002773">
    <property type="entry name" value="PRK02866.1"/>
    <property type="match status" value="1"/>
</dbReference>
<dbReference type="PANTHER" id="PTHR34186">
    <property type="entry name" value="CYANATE HYDRATASE"/>
    <property type="match status" value="1"/>
</dbReference>
<dbReference type="PANTHER" id="PTHR34186:SF2">
    <property type="entry name" value="CYANATE HYDRATASE"/>
    <property type="match status" value="1"/>
</dbReference>
<dbReference type="Pfam" id="PF02560">
    <property type="entry name" value="Cyanate_lyase"/>
    <property type="match status" value="1"/>
</dbReference>
<dbReference type="Pfam" id="PF21291">
    <property type="entry name" value="CYNS_N"/>
    <property type="match status" value="1"/>
</dbReference>
<dbReference type="PIRSF" id="PIRSF001263">
    <property type="entry name" value="Cyanate_hydratas"/>
    <property type="match status" value="1"/>
</dbReference>
<dbReference type="PRINTS" id="PR01693">
    <property type="entry name" value="CYANASE"/>
</dbReference>
<dbReference type="SMART" id="SM01116">
    <property type="entry name" value="Cyanate_lyase"/>
    <property type="match status" value="1"/>
</dbReference>
<dbReference type="SUPFAM" id="SSF55234">
    <property type="entry name" value="Cyanase C-terminal domain"/>
    <property type="match status" value="1"/>
</dbReference>
<dbReference type="SUPFAM" id="SSF47413">
    <property type="entry name" value="lambda repressor-like DNA-binding domains"/>
    <property type="match status" value="1"/>
</dbReference>
<evidence type="ECO:0000255" key="1">
    <source>
        <dbReference type="HAMAP-Rule" id="MF_00535"/>
    </source>
</evidence>
<protein>
    <recommendedName>
        <fullName evidence="1">Cyanate hydratase</fullName>
        <shortName evidence="1">Cyanase</shortName>
        <ecNumber evidence="1">4.2.1.104</ecNumber>
    </recommendedName>
    <alternativeName>
        <fullName evidence="1">Cyanate hydrolase</fullName>
    </alternativeName>
    <alternativeName>
        <fullName evidence="1">Cyanate lyase</fullName>
    </alternativeName>
</protein>
<keyword id="KW-0456">Lyase</keyword>
<feature type="chain" id="PRO_1000128225" description="Cyanate hydratase">
    <location>
        <begin position="1"/>
        <end position="156"/>
    </location>
</feature>
<feature type="active site" evidence="1">
    <location>
        <position position="96"/>
    </location>
</feature>
<feature type="active site" evidence="1">
    <location>
        <position position="99"/>
    </location>
</feature>
<feature type="active site" evidence="1">
    <location>
        <position position="122"/>
    </location>
</feature>